<name>DUSK3_DROME</name>
<dbReference type="EC" id="3.1.3.16" evidence="6 10"/>
<dbReference type="EC" id="3.1.3.48" evidence="6 10"/>
<dbReference type="EMBL" id="AY043264">
    <property type="protein sequence ID" value="AAK85311.1"/>
    <property type="molecule type" value="mRNA"/>
</dbReference>
<dbReference type="EMBL" id="AE014296">
    <property type="protein sequence ID" value="AAF49192.2"/>
    <property type="molecule type" value="Genomic_DNA"/>
</dbReference>
<dbReference type="EMBL" id="AE014296">
    <property type="protein sequence ID" value="AAF49193.2"/>
    <property type="molecule type" value="Genomic_DNA"/>
</dbReference>
<dbReference type="EMBL" id="AY060472">
    <property type="protein sequence ID" value="AAL25511.1"/>
    <property type="molecule type" value="mRNA"/>
</dbReference>
<dbReference type="EMBL" id="BT003536">
    <property type="protein sequence ID" value="AAO39540.1"/>
    <property type="status" value="ALT_INIT"/>
    <property type="molecule type" value="mRNA"/>
</dbReference>
<dbReference type="RefSeq" id="NP_001262032.1">
    <molecule id="Q9VVW5-1"/>
    <property type="nucleotide sequence ID" value="NM_001275103.1"/>
</dbReference>
<dbReference type="RefSeq" id="NP_649087.1">
    <molecule id="Q9VVW5-1"/>
    <property type="nucleotide sequence ID" value="NM_140830.2"/>
</dbReference>
<dbReference type="RefSeq" id="NP_730385.1">
    <molecule id="Q9VVW5-2"/>
    <property type="nucleotide sequence ID" value="NM_168785.1"/>
</dbReference>
<dbReference type="SMR" id="Q9VVW5"/>
<dbReference type="BioGRID" id="65359">
    <property type="interactions" value="8"/>
</dbReference>
<dbReference type="FunCoup" id="Q9VVW5">
    <property type="interactions" value="522"/>
</dbReference>
<dbReference type="STRING" id="7227.FBpp0303122"/>
<dbReference type="PaxDb" id="7227-FBpp0305422"/>
<dbReference type="DNASU" id="40081"/>
<dbReference type="EnsemblMetazoa" id="FBtr0075035">
    <molecule id="Q9VVW5-1"/>
    <property type="protein sequence ID" value="FBpp0074802"/>
    <property type="gene ID" value="FBgn0036844"/>
</dbReference>
<dbReference type="EnsemblMetazoa" id="FBtr0075036">
    <molecule id="Q9VVW5-2"/>
    <property type="protein sequence ID" value="FBpp0074803"/>
    <property type="gene ID" value="FBgn0036844"/>
</dbReference>
<dbReference type="EnsemblMetazoa" id="FBtr0333220">
    <molecule id="Q9VVW5-1"/>
    <property type="protein sequence ID" value="FBpp0305422"/>
    <property type="gene ID" value="FBgn0036844"/>
</dbReference>
<dbReference type="GeneID" id="40081"/>
<dbReference type="KEGG" id="dme:Dmel_CG14080"/>
<dbReference type="UCSC" id="CG14080-RA">
    <property type="organism name" value="d. melanogaster"/>
</dbReference>
<dbReference type="UCSC" id="CG14080-RB">
    <molecule id="Q9VVW5-1"/>
    <property type="organism name" value="d. melanogaster"/>
</dbReference>
<dbReference type="AGR" id="FB:FBgn0036844"/>
<dbReference type="CTD" id="40081"/>
<dbReference type="FlyBase" id="FBgn0036844">
    <property type="gene designation" value="Mkp3"/>
</dbReference>
<dbReference type="VEuPathDB" id="VectorBase:FBgn0036844"/>
<dbReference type="eggNOG" id="KOG1717">
    <property type="taxonomic scope" value="Eukaryota"/>
</dbReference>
<dbReference type="GeneTree" id="ENSGT00940000169406"/>
<dbReference type="InParanoid" id="Q9VVW5"/>
<dbReference type="OMA" id="SADWQDS"/>
<dbReference type="OrthoDB" id="165342at2759"/>
<dbReference type="PhylomeDB" id="Q9VVW5"/>
<dbReference type="Reactome" id="R-DME-112409">
    <property type="pathway name" value="RAF-independent MAPK1/3 activation"/>
</dbReference>
<dbReference type="Reactome" id="R-DME-202670">
    <property type="pathway name" value="ERKs are inactivated"/>
</dbReference>
<dbReference type="Reactome" id="R-DME-5675221">
    <property type="pathway name" value="Negative regulation of MAPK pathway"/>
</dbReference>
<dbReference type="SignaLink" id="Q9VVW5"/>
<dbReference type="BioGRID-ORCS" id="40081">
    <property type="hits" value="0 hits in 3 CRISPR screens"/>
</dbReference>
<dbReference type="GenomeRNAi" id="40081"/>
<dbReference type="PRO" id="PR:Q9VVW5"/>
<dbReference type="Proteomes" id="UP000000803">
    <property type="component" value="Chromosome 3L"/>
</dbReference>
<dbReference type="Bgee" id="FBgn0036844">
    <property type="expression patterns" value="Expressed in dorsal appendage forming follicle cell in ovary and 320 other cell types or tissues"/>
</dbReference>
<dbReference type="ExpressionAtlas" id="Q9VVW5">
    <property type="expression patterns" value="baseline and differential"/>
</dbReference>
<dbReference type="GO" id="GO:0005737">
    <property type="term" value="C:cytoplasm"/>
    <property type="evidence" value="ECO:0000318"/>
    <property type="project" value="GO_Central"/>
</dbReference>
<dbReference type="GO" id="GO:0005829">
    <property type="term" value="C:cytosol"/>
    <property type="evidence" value="ECO:0000314"/>
    <property type="project" value="FlyBase"/>
</dbReference>
<dbReference type="GO" id="GO:0033550">
    <property type="term" value="F:MAP kinase tyrosine phosphatase activity"/>
    <property type="evidence" value="ECO:0000314"/>
    <property type="project" value="FlyBase"/>
</dbReference>
<dbReference type="GO" id="GO:0017017">
    <property type="term" value="F:MAP kinase tyrosine/serine/threonine phosphatase activity"/>
    <property type="evidence" value="ECO:0000318"/>
    <property type="project" value="GO_Central"/>
</dbReference>
<dbReference type="GO" id="GO:0004722">
    <property type="term" value="F:protein serine/threonine phosphatase activity"/>
    <property type="evidence" value="ECO:0007669"/>
    <property type="project" value="UniProtKB-EC"/>
</dbReference>
<dbReference type="GO" id="GO:0008330">
    <property type="term" value="F:protein tyrosine/threonine phosphatase activity"/>
    <property type="evidence" value="ECO:0000318"/>
    <property type="project" value="GO_Central"/>
</dbReference>
<dbReference type="GO" id="GO:0007474">
    <property type="term" value="P:imaginal disc-derived wing vein specification"/>
    <property type="evidence" value="ECO:0000315"/>
    <property type="project" value="FlyBase"/>
</dbReference>
<dbReference type="GO" id="GO:0035160">
    <property type="term" value="P:maintenance of epithelial integrity, open tracheal system"/>
    <property type="evidence" value="ECO:0000315"/>
    <property type="project" value="FlyBase"/>
</dbReference>
<dbReference type="GO" id="GO:0002385">
    <property type="term" value="P:mucosal immune response"/>
    <property type="evidence" value="ECO:0000315"/>
    <property type="project" value="FlyBase"/>
</dbReference>
<dbReference type="GO" id="GO:0042059">
    <property type="term" value="P:negative regulation of epidermal growth factor receptor signaling pathway"/>
    <property type="evidence" value="ECO:0000316"/>
    <property type="project" value="FlyBase"/>
</dbReference>
<dbReference type="GO" id="GO:0070373">
    <property type="term" value="P:negative regulation of ERK1 and ERK2 cascade"/>
    <property type="evidence" value="ECO:0000314"/>
    <property type="project" value="FlyBase"/>
</dbReference>
<dbReference type="GO" id="GO:0046627">
    <property type="term" value="P:negative regulation of insulin receptor signaling pathway"/>
    <property type="evidence" value="ECO:0000314"/>
    <property type="project" value="FlyBase"/>
</dbReference>
<dbReference type="GO" id="GO:0007428">
    <property type="term" value="P:primary branching, open tracheal system"/>
    <property type="evidence" value="ECO:0000315"/>
    <property type="project" value="FlyBase"/>
</dbReference>
<dbReference type="GO" id="GO:0042127">
    <property type="term" value="P:regulation of cell population proliferation"/>
    <property type="evidence" value="ECO:0000316"/>
    <property type="project" value="FlyBase"/>
</dbReference>
<dbReference type="GO" id="GO:0007165">
    <property type="term" value="P:signal transduction"/>
    <property type="evidence" value="ECO:0000318"/>
    <property type="project" value="GO_Central"/>
</dbReference>
<dbReference type="CDD" id="cd01446">
    <property type="entry name" value="DSP_MapKP"/>
    <property type="match status" value="1"/>
</dbReference>
<dbReference type="CDD" id="cd14566">
    <property type="entry name" value="DSP_MKP_classII"/>
    <property type="match status" value="1"/>
</dbReference>
<dbReference type="FunFam" id="3.40.250.10:FF:000054">
    <property type="entry name" value="Dual specificity phosphatase 9"/>
    <property type="match status" value="1"/>
</dbReference>
<dbReference type="FunFam" id="3.90.190.10:FF:000204">
    <property type="entry name" value="Dual specificity protein phosphatase Mpk3"/>
    <property type="match status" value="1"/>
</dbReference>
<dbReference type="Gene3D" id="3.90.190.10">
    <property type="entry name" value="Protein tyrosine phosphatase superfamily"/>
    <property type="match status" value="1"/>
</dbReference>
<dbReference type="Gene3D" id="3.40.250.10">
    <property type="entry name" value="Rhodanese-like domain"/>
    <property type="match status" value="1"/>
</dbReference>
<dbReference type="InterPro" id="IPR000340">
    <property type="entry name" value="Dual-sp_phosphatase_cat-dom"/>
</dbReference>
<dbReference type="InterPro" id="IPR008343">
    <property type="entry name" value="MKP"/>
</dbReference>
<dbReference type="InterPro" id="IPR029021">
    <property type="entry name" value="Prot-tyrosine_phosphatase-like"/>
</dbReference>
<dbReference type="InterPro" id="IPR001763">
    <property type="entry name" value="Rhodanese-like_dom"/>
</dbReference>
<dbReference type="InterPro" id="IPR036873">
    <property type="entry name" value="Rhodanese-like_dom_sf"/>
</dbReference>
<dbReference type="InterPro" id="IPR000387">
    <property type="entry name" value="Tyr_Pase_dom"/>
</dbReference>
<dbReference type="InterPro" id="IPR020422">
    <property type="entry name" value="TYR_PHOSPHATASE_DUAL_dom"/>
</dbReference>
<dbReference type="PANTHER" id="PTHR10159">
    <property type="entry name" value="DUAL SPECIFICITY PROTEIN PHOSPHATASE"/>
    <property type="match status" value="1"/>
</dbReference>
<dbReference type="PANTHER" id="PTHR10159:SF519">
    <property type="entry name" value="DUAL SPECIFICITY PROTEIN PHOSPHATASE MPK3"/>
    <property type="match status" value="1"/>
</dbReference>
<dbReference type="Pfam" id="PF00782">
    <property type="entry name" value="DSPc"/>
    <property type="match status" value="1"/>
</dbReference>
<dbReference type="Pfam" id="PF00581">
    <property type="entry name" value="Rhodanese"/>
    <property type="match status" value="1"/>
</dbReference>
<dbReference type="PIRSF" id="PIRSF000939">
    <property type="entry name" value="MAPK_Ptase"/>
    <property type="match status" value="1"/>
</dbReference>
<dbReference type="PRINTS" id="PR01764">
    <property type="entry name" value="MAPKPHPHTASE"/>
</dbReference>
<dbReference type="SMART" id="SM00195">
    <property type="entry name" value="DSPc"/>
    <property type="match status" value="1"/>
</dbReference>
<dbReference type="SMART" id="SM00450">
    <property type="entry name" value="RHOD"/>
    <property type="match status" value="1"/>
</dbReference>
<dbReference type="SUPFAM" id="SSF52799">
    <property type="entry name" value="(Phosphotyrosine protein) phosphatases II"/>
    <property type="match status" value="1"/>
</dbReference>
<dbReference type="SUPFAM" id="SSF52821">
    <property type="entry name" value="Rhodanese/Cell cycle control phosphatase"/>
    <property type="match status" value="1"/>
</dbReference>
<dbReference type="PROSITE" id="PS50206">
    <property type="entry name" value="RHODANESE_3"/>
    <property type="match status" value="1"/>
</dbReference>
<dbReference type="PROSITE" id="PS50056">
    <property type="entry name" value="TYR_PHOSPHATASE_2"/>
    <property type="match status" value="1"/>
</dbReference>
<dbReference type="PROSITE" id="PS50054">
    <property type="entry name" value="TYR_PHOSPHATASE_DUAL"/>
    <property type="match status" value="1"/>
</dbReference>
<gene>
    <name type="primary">Mkp3</name>
    <name type="ORF">CG14080</name>
</gene>
<feature type="chain" id="PRO_0000408762" description="Dual specificity protein phosphatase Mpk3">
    <location>
        <begin position="1"/>
        <end position="411"/>
    </location>
</feature>
<feature type="domain" description="Rhodanese" evidence="4">
    <location>
        <begin position="22"/>
        <end position="149"/>
    </location>
</feature>
<feature type="domain" description="Tyrosine-protein phosphatase" evidence="3">
    <location>
        <begin position="214"/>
        <end position="358"/>
    </location>
</feature>
<feature type="region of interest" description="Disordered" evidence="5">
    <location>
        <begin position="184"/>
        <end position="209"/>
    </location>
</feature>
<feature type="compositionally biased region" description="Low complexity" evidence="5">
    <location>
        <begin position="184"/>
        <end position="197"/>
    </location>
</feature>
<feature type="active site" description="Phosphocysteine intermediate" evidence="3">
    <location>
        <position position="302"/>
    </location>
</feature>
<feature type="splice variant" id="VSP_041148" description="In isoform A." evidence="14">
    <location>
        <begin position="1"/>
        <end position="170"/>
    </location>
</feature>
<feature type="mutagenesis site" description="Reduces binding affinity to substrate by approximately 18-fold." evidence="6">
    <original>RR</original>
    <variation>AA</variation>
    <location>
        <begin position="56"/>
        <end position="57"/>
    </location>
</feature>
<feature type="mutagenesis site" description="Loss of activity." evidence="6">
    <original>C</original>
    <variation>A</variation>
    <location>
        <position position="302"/>
    </location>
</feature>
<feature type="mutagenesis site" description="Causes the differentiation of ectopic vein stretches in several regions of the wing. Shows elimination of distal stretches of longitunal veins L2-L5. Causes substitution of the wing by proximal hinge tissue. Affects the development of macrochaetae or the formation of the thorax." evidence="11">
    <original>Y</original>
    <variation>N</variation>
    <location>
        <position position="316"/>
    </location>
</feature>
<feature type="sequence conflict" description="In Ref. 1; AAK85311 and 4; AAL25511." evidence="15" ref="1 4">
    <original>H</original>
    <variation>L</variation>
    <location>
        <position position="208"/>
    </location>
</feature>
<feature type="sequence conflict" description="In Ref. 1; AAK85311 and 4; AAL25511." evidence="15" ref="1 4">
    <original>T</original>
    <variation>A</variation>
    <location>
        <position position="384"/>
    </location>
</feature>
<reference key="1">
    <citation type="journal article" date="2002" name="Biochem. J.">
        <title>Isolation and characterization of a Drosophila homologue of mitogen-activated protein kinase phosphatase-3 which has a high substrate specificity towards extracellular-signal-regulated kinase.</title>
        <authorList>
            <person name="Kim S.H."/>
            <person name="Kwon H.B."/>
            <person name="Kim Y.S."/>
            <person name="Ryu J.H."/>
            <person name="Kim K.S."/>
            <person name="Ahn Y."/>
            <person name="Lee W.J."/>
            <person name="Choi K.Y."/>
        </authorList>
    </citation>
    <scope>NUCLEOTIDE SEQUENCE [MRNA] (ISOFORM B)</scope>
    <scope>FUNCTION</scope>
    <scope>CATALYTIC ACTIVITY</scope>
    <scope>ACTIVITY REGULATION</scope>
    <scope>INTERACTION WITH RL</scope>
    <scope>SUBCELLULAR LOCATION</scope>
    <scope>DEVELOPMENTAL STAGE</scope>
    <scope>MUTAGENESIS OF 56-ARG-ARG-57 AND CYS-302</scope>
</reference>
<reference key="2">
    <citation type="journal article" date="2000" name="Science">
        <title>The genome sequence of Drosophila melanogaster.</title>
        <authorList>
            <person name="Adams M.D."/>
            <person name="Celniker S.E."/>
            <person name="Holt R.A."/>
            <person name="Evans C.A."/>
            <person name="Gocayne J.D."/>
            <person name="Amanatides P.G."/>
            <person name="Scherer S.E."/>
            <person name="Li P.W."/>
            <person name="Hoskins R.A."/>
            <person name="Galle R.F."/>
            <person name="George R.A."/>
            <person name="Lewis S.E."/>
            <person name="Richards S."/>
            <person name="Ashburner M."/>
            <person name="Henderson S.N."/>
            <person name="Sutton G.G."/>
            <person name="Wortman J.R."/>
            <person name="Yandell M.D."/>
            <person name="Zhang Q."/>
            <person name="Chen L.X."/>
            <person name="Brandon R.C."/>
            <person name="Rogers Y.-H.C."/>
            <person name="Blazej R.G."/>
            <person name="Champe M."/>
            <person name="Pfeiffer B.D."/>
            <person name="Wan K.H."/>
            <person name="Doyle C."/>
            <person name="Baxter E.G."/>
            <person name="Helt G."/>
            <person name="Nelson C.R."/>
            <person name="Miklos G.L.G."/>
            <person name="Abril J.F."/>
            <person name="Agbayani A."/>
            <person name="An H.-J."/>
            <person name="Andrews-Pfannkoch C."/>
            <person name="Baldwin D."/>
            <person name="Ballew R.M."/>
            <person name="Basu A."/>
            <person name="Baxendale J."/>
            <person name="Bayraktaroglu L."/>
            <person name="Beasley E.M."/>
            <person name="Beeson K.Y."/>
            <person name="Benos P.V."/>
            <person name="Berman B.P."/>
            <person name="Bhandari D."/>
            <person name="Bolshakov S."/>
            <person name="Borkova D."/>
            <person name="Botchan M.R."/>
            <person name="Bouck J."/>
            <person name="Brokstein P."/>
            <person name="Brottier P."/>
            <person name="Burtis K.C."/>
            <person name="Busam D.A."/>
            <person name="Butler H."/>
            <person name="Cadieu E."/>
            <person name="Center A."/>
            <person name="Chandra I."/>
            <person name="Cherry J.M."/>
            <person name="Cawley S."/>
            <person name="Dahlke C."/>
            <person name="Davenport L.B."/>
            <person name="Davies P."/>
            <person name="de Pablos B."/>
            <person name="Delcher A."/>
            <person name="Deng Z."/>
            <person name="Mays A.D."/>
            <person name="Dew I."/>
            <person name="Dietz S.M."/>
            <person name="Dodson K."/>
            <person name="Doup L.E."/>
            <person name="Downes M."/>
            <person name="Dugan-Rocha S."/>
            <person name="Dunkov B.C."/>
            <person name="Dunn P."/>
            <person name="Durbin K.J."/>
            <person name="Evangelista C.C."/>
            <person name="Ferraz C."/>
            <person name="Ferriera S."/>
            <person name="Fleischmann W."/>
            <person name="Fosler C."/>
            <person name="Gabrielian A.E."/>
            <person name="Garg N.S."/>
            <person name="Gelbart W.M."/>
            <person name="Glasser K."/>
            <person name="Glodek A."/>
            <person name="Gong F."/>
            <person name="Gorrell J.H."/>
            <person name="Gu Z."/>
            <person name="Guan P."/>
            <person name="Harris M."/>
            <person name="Harris N.L."/>
            <person name="Harvey D.A."/>
            <person name="Heiman T.J."/>
            <person name="Hernandez J.R."/>
            <person name="Houck J."/>
            <person name="Hostin D."/>
            <person name="Houston K.A."/>
            <person name="Howland T.J."/>
            <person name="Wei M.-H."/>
            <person name="Ibegwam C."/>
            <person name="Jalali M."/>
            <person name="Kalush F."/>
            <person name="Karpen G.H."/>
            <person name="Ke Z."/>
            <person name="Kennison J.A."/>
            <person name="Ketchum K.A."/>
            <person name="Kimmel B.E."/>
            <person name="Kodira C.D."/>
            <person name="Kraft C.L."/>
            <person name="Kravitz S."/>
            <person name="Kulp D."/>
            <person name="Lai Z."/>
            <person name="Lasko P."/>
            <person name="Lei Y."/>
            <person name="Levitsky A.A."/>
            <person name="Li J.H."/>
            <person name="Li Z."/>
            <person name="Liang Y."/>
            <person name="Lin X."/>
            <person name="Liu X."/>
            <person name="Mattei B."/>
            <person name="McIntosh T.C."/>
            <person name="McLeod M.P."/>
            <person name="McPherson D."/>
            <person name="Merkulov G."/>
            <person name="Milshina N.V."/>
            <person name="Mobarry C."/>
            <person name="Morris J."/>
            <person name="Moshrefi A."/>
            <person name="Mount S.M."/>
            <person name="Moy M."/>
            <person name="Murphy B."/>
            <person name="Murphy L."/>
            <person name="Muzny D.M."/>
            <person name="Nelson D.L."/>
            <person name="Nelson D.R."/>
            <person name="Nelson K.A."/>
            <person name="Nixon K."/>
            <person name="Nusskern D.R."/>
            <person name="Pacleb J.M."/>
            <person name="Palazzolo M."/>
            <person name="Pittman G.S."/>
            <person name="Pan S."/>
            <person name="Pollard J."/>
            <person name="Puri V."/>
            <person name="Reese M.G."/>
            <person name="Reinert K."/>
            <person name="Remington K."/>
            <person name="Saunders R.D.C."/>
            <person name="Scheeler F."/>
            <person name="Shen H."/>
            <person name="Shue B.C."/>
            <person name="Siden-Kiamos I."/>
            <person name="Simpson M."/>
            <person name="Skupski M.P."/>
            <person name="Smith T.J."/>
            <person name="Spier E."/>
            <person name="Spradling A.C."/>
            <person name="Stapleton M."/>
            <person name="Strong R."/>
            <person name="Sun E."/>
            <person name="Svirskas R."/>
            <person name="Tector C."/>
            <person name="Turner R."/>
            <person name="Venter E."/>
            <person name="Wang A.H."/>
            <person name="Wang X."/>
            <person name="Wang Z.-Y."/>
            <person name="Wassarman D.A."/>
            <person name="Weinstock G.M."/>
            <person name="Weissenbach J."/>
            <person name="Williams S.M."/>
            <person name="Woodage T."/>
            <person name="Worley K.C."/>
            <person name="Wu D."/>
            <person name="Yang S."/>
            <person name="Yao Q.A."/>
            <person name="Ye J."/>
            <person name="Yeh R.-F."/>
            <person name="Zaveri J.S."/>
            <person name="Zhan M."/>
            <person name="Zhang G."/>
            <person name="Zhao Q."/>
            <person name="Zheng L."/>
            <person name="Zheng X.H."/>
            <person name="Zhong F.N."/>
            <person name="Zhong W."/>
            <person name="Zhou X."/>
            <person name="Zhu S.C."/>
            <person name="Zhu X."/>
            <person name="Smith H.O."/>
            <person name="Gibbs R.A."/>
            <person name="Myers E.W."/>
            <person name="Rubin G.M."/>
            <person name="Venter J.C."/>
        </authorList>
    </citation>
    <scope>NUCLEOTIDE SEQUENCE [LARGE SCALE GENOMIC DNA]</scope>
    <source>
        <strain>Berkeley</strain>
    </source>
</reference>
<reference key="3">
    <citation type="journal article" date="2002" name="Genome Biol.">
        <title>Annotation of the Drosophila melanogaster euchromatic genome: a systematic review.</title>
        <authorList>
            <person name="Misra S."/>
            <person name="Crosby M.A."/>
            <person name="Mungall C.J."/>
            <person name="Matthews B.B."/>
            <person name="Campbell K.S."/>
            <person name="Hradecky P."/>
            <person name="Huang Y."/>
            <person name="Kaminker J.S."/>
            <person name="Millburn G.H."/>
            <person name="Prochnik S.E."/>
            <person name="Smith C.D."/>
            <person name="Tupy J.L."/>
            <person name="Whitfield E.J."/>
            <person name="Bayraktaroglu L."/>
            <person name="Berman B.P."/>
            <person name="Bettencourt B.R."/>
            <person name="Celniker S.E."/>
            <person name="de Grey A.D.N.J."/>
            <person name="Drysdale R.A."/>
            <person name="Harris N.L."/>
            <person name="Richter J."/>
            <person name="Russo S."/>
            <person name="Schroeder A.J."/>
            <person name="Shu S.Q."/>
            <person name="Stapleton M."/>
            <person name="Yamada C."/>
            <person name="Ashburner M."/>
            <person name="Gelbart W.M."/>
            <person name="Rubin G.M."/>
            <person name="Lewis S.E."/>
        </authorList>
    </citation>
    <scope>GENOME REANNOTATION</scope>
    <scope>ALTERNATIVE SPLICING</scope>
    <source>
        <strain>Berkeley</strain>
    </source>
</reference>
<reference key="4">
    <citation type="journal article" date="2002" name="Genome Biol.">
        <title>A Drosophila full-length cDNA resource.</title>
        <authorList>
            <person name="Stapleton M."/>
            <person name="Carlson J.W."/>
            <person name="Brokstein P."/>
            <person name="Yu C."/>
            <person name="Champe M."/>
            <person name="George R.A."/>
            <person name="Guarin H."/>
            <person name="Kronmiller B."/>
            <person name="Pacleb J.M."/>
            <person name="Park S."/>
            <person name="Wan K.H."/>
            <person name="Rubin G.M."/>
            <person name="Celniker S.E."/>
        </authorList>
    </citation>
    <scope>NUCLEOTIDE SEQUENCE [LARGE SCALE MRNA] (ISOFORM B)</scope>
    <source>
        <strain evidence="7">Berkeley</strain>
        <tissue evidence="7">Embryo</tissue>
    </source>
</reference>
<reference key="5">
    <citation type="submission" date="2003-02" db="EMBL/GenBank/DDBJ databases">
        <authorList>
            <person name="Stapleton M."/>
            <person name="Brokstein P."/>
            <person name="Hong L."/>
            <person name="Agbayani A."/>
            <person name="Carlson J."/>
            <person name="Champe M."/>
            <person name="Chavez C."/>
            <person name="Dorsett V."/>
            <person name="Dresnek D."/>
            <person name="Farfan D."/>
            <person name="Frise E."/>
            <person name="George R."/>
            <person name="Gonzalez M."/>
            <person name="Guarin H."/>
            <person name="Kronmiller B."/>
            <person name="Li P."/>
            <person name="Liao G."/>
            <person name="Miranda A."/>
            <person name="Mungall C.J."/>
            <person name="Nunoo J."/>
            <person name="Pacleb J."/>
            <person name="Paragas V."/>
            <person name="Park S."/>
            <person name="Patel S."/>
            <person name="Phouanenavong S."/>
            <person name="Wan K."/>
            <person name="Yu C."/>
            <person name="Lewis S.E."/>
            <person name="Rubin G.M."/>
            <person name="Celniker S."/>
        </authorList>
    </citation>
    <scope>NUCLEOTIDE SEQUENCE [LARGE SCALE MRNA] (ISOFORM A)</scope>
    <source>
        <strain evidence="18">Berkeley</strain>
        <tissue>Embryo</tissue>
    </source>
</reference>
<reference key="6">
    <citation type="journal article" date="2003" name="Ann. N. Y. Acad. Sci.">
        <title>Regulation of Drosophila MKP-3 by Drosophila ERK.</title>
        <authorList>
            <person name="Kim S.E."/>
            <person name="Kim S.H."/>
            <person name="Choi K.Y."/>
        </authorList>
    </citation>
    <scope>FUNCTION</scope>
    <scope>CATALYTIC ACTIVITY</scope>
    <scope>ACTIVITY REGULATION</scope>
</reference>
<reference key="7">
    <citation type="journal article" date="2003" name="Development">
        <title>The Drosophila dual-specificity ERK phosphatase DMKP3 cooperates with the ERK tyrosine phosphatase PTP-ER.</title>
        <authorList>
            <person name="Rintelen F."/>
            <person name="Hafen E."/>
            <person name="Nairz K."/>
        </authorList>
    </citation>
    <scope>FUNCTION</scope>
    <scope>DEVELOPMENTAL STAGE</scope>
    <scope>DISRUPTION PHENOTYPE</scope>
</reference>
<reference key="8">
    <citation type="journal article" date="2004" name="Mol. Cell. Biol.">
        <title>MKP-3 has essential roles as a negative regulator of the Ras/mitogen-activated protein kinase pathway during Drosophila development.</title>
        <authorList>
            <person name="Kim M."/>
            <person name="Cha G.H."/>
            <person name="Kim S."/>
            <person name="Lee J.H."/>
            <person name="Park J."/>
            <person name="Koh H."/>
            <person name="Choi K.Y."/>
            <person name="Chung J."/>
        </authorList>
    </citation>
    <scope>FUNCTION</scope>
    <scope>TISSUE SPECIFICITY</scope>
    <scope>DISRUPTION PHENOTYPE</scope>
</reference>
<reference key="9">
    <citation type="journal article" date="2005" name="Dev. Dyn.">
        <title>Conserved cross-interactions in Drosophila and Xenopus between Ras/MAPK signaling and the dual-specificity phosphatase MKP3.</title>
        <authorList>
            <person name="Gomez A.R."/>
            <person name="Lopez-Varea A."/>
            <person name="Molnar C."/>
            <person name="de la Calle-Mustienes E."/>
            <person name="Ruiz-Gomez M."/>
            <person name="Gomez-Skarmeta J.L."/>
            <person name="de Celis J.F."/>
        </authorList>
    </citation>
    <scope>FUNCTION</scope>
    <scope>DEVELOPMENTAL STAGE</scope>
    <scope>MUTAGENESIS OF TYR-316</scope>
</reference>
<reference key="10">
    <citation type="journal article" date="2006" name="Development">
        <title>Egfr is essential for maintaining epithelial integrity during tracheal remodelling in Drosophila.</title>
        <authorList>
            <person name="Cela C."/>
            <person name="Llimargas M."/>
        </authorList>
    </citation>
    <scope>FUNCTION</scope>
    <scope>DEVELOPMENTAL STAGE</scope>
    <scope>DISRUPTION PHENOTYPE</scope>
</reference>
<evidence type="ECO:0000250" key="1">
    <source>
        <dbReference type="UniProtKB" id="Q16828"/>
    </source>
</evidence>
<evidence type="ECO:0000255" key="2"/>
<evidence type="ECO:0000255" key="3">
    <source>
        <dbReference type="PROSITE-ProRule" id="PRU00160"/>
    </source>
</evidence>
<evidence type="ECO:0000255" key="4">
    <source>
        <dbReference type="PROSITE-ProRule" id="PRU00173"/>
    </source>
</evidence>
<evidence type="ECO:0000256" key="5">
    <source>
        <dbReference type="SAM" id="MobiDB-lite"/>
    </source>
</evidence>
<evidence type="ECO:0000269" key="6">
    <source>
    </source>
</evidence>
<evidence type="ECO:0000269" key="7">
    <source>
    </source>
</evidence>
<evidence type="ECO:0000269" key="8">
    <source>
    </source>
</evidence>
<evidence type="ECO:0000269" key="9">
    <source>
    </source>
</evidence>
<evidence type="ECO:0000269" key="10">
    <source>
    </source>
</evidence>
<evidence type="ECO:0000269" key="11">
    <source>
    </source>
</evidence>
<evidence type="ECO:0000269" key="12">
    <source>
    </source>
</evidence>
<evidence type="ECO:0000303" key="13">
    <source>
    </source>
</evidence>
<evidence type="ECO:0000303" key="14">
    <source ref="5"/>
</evidence>
<evidence type="ECO:0000305" key="15"/>
<evidence type="ECO:0000312" key="16">
    <source>
        <dbReference type="EMBL" id="AAF49192.2"/>
    </source>
</evidence>
<evidence type="ECO:0000312" key="17">
    <source>
        <dbReference type="EMBL" id="AAF49193.2"/>
    </source>
</evidence>
<evidence type="ECO:0000312" key="18">
    <source>
        <dbReference type="EMBL" id="AAO39540.1"/>
    </source>
</evidence>
<accession>Q9VVW5</accession>
<accession>Q86P14</accession>
<accession>Q95SV1</accession>
<accession>Q9VVW4</accession>
<protein>
    <recommendedName>
        <fullName evidence="1">Dual specificity protein phosphatase Mpk3</fullName>
        <ecNumber evidence="6 10">3.1.3.16</ecNumber>
        <ecNumber evidence="6 10">3.1.3.48</ecNumber>
    </recommendedName>
    <alternativeName>
        <fullName evidence="13">Drosophila MKP3</fullName>
        <shortName evidence="13">DMKP3</shortName>
    </alternativeName>
    <alternativeName>
        <fullName evidence="1 16">Mitogen-activated protein kinase phosphatase 3</fullName>
        <shortName evidence="1">MAP kinase phosphatase 3</shortName>
        <shortName evidence="1">MKP-3</shortName>
    </alternativeName>
</protein>
<sequence>MPETEHETCSKEWLQSQLRSLDSKDLILLDCRGSHEYSESHIRGAVNLCIPSIVLRRLAVGKIDLASTIKSPELKQRIQSGYKLCWFILYNGEGVPGQNQEIAGAGSLAVAMDSIISILHRRLKQDGCRVVALQDGFNNFRQAFPEWCEDDNQTHSKEIESSRNVQTDQLMGLRSLRISTTQSDSACSSSAESSDCESSSHHHHHHSHHNYNEAPVEIIPGLLFLGNATHSCDSEALKKYNIKYVLNVTPDLPNKFKESGDIKYLQIPITDHYSQDLAIHFPDAIQFIEEARSASSVVLVHCLAGVSRSVTVTLAYLMHTRGLSLNDAFAMVRDRKPDVSPNFHFMQQLLSFESQLRLRPGSRFSCSCIAPDCNCMQTTGFMATHLANATGVSPDSGIEFDRWTPSDTGLK</sequence>
<proteinExistence type="evidence at protein level"/>
<organism>
    <name type="scientific">Drosophila melanogaster</name>
    <name type="common">Fruit fly</name>
    <dbReference type="NCBI Taxonomy" id="7227"/>
    <lineage>
        <taxon>Eukaryota</taxon>
        <taxon>Metazoa</taxon>
        <taxon>Ecdysozoa</taxon>
        <taxon>Arthropoda</taxon>
        <taxon>Hexapoda</taxon>
        <taxon>Insecta</taxon>
        <taxon>Pterygota</taxon>
        <taxon>Neoptera</taxon>
        <taxon>Endopterygota</taxon>
        <taxon>Diptera</taxon>
        <taxon>Brachycera</taxon>
        <taxon>Muscomorpha</taxon>
        <taxon>Ephydroidea</taxon>
        <taxon>Drosophilidae</taxon>
        <taxon>Drosophila</taxon>
        <taxon>Sophophora</taxon>
    </lineage>
</organism>
<keyword id="KW-0025">Alternative splicing</keyword>
<keyword id="KW-0963">Cytoplasm</keyword>
<keyword id="KW-0378">Hydrolase</keyword>
<keyword id="KW-0904">Protein phosphatase</keyword>
<keyword id="KW-1185">Reference proteome</keyword>
<comment type="function">
    <text evidence="6 8 9 10 11 12">Negatively regulates the activity of members of the MAP kinase family in response to changes in the cellular environment. Has a specificity for the ERK family. Acts as a negative regulator in a variety of developmental processes including cell differentiation and proliferation controlled by the Ras/ERK pathway. Suppresses the photoreceptor cell differentiation and wing vein formation. Required for proper oogenesis and early embryogenesis. Functions autonomously in a subset of photoreceptor progenitor cells in eye imaginal disks. Also appears to be required in surrounding non-neuronal cells for ommatidial patterning and photoreceptor differentiation. Plays a role in the maintenance of epithelial integrity during tracheal development.</text>
</comment>
<comment type="catalytic activity">
    <reaction evidence="6 10">
        <text>O-phospho-L-tyrosyl-[protein] + H2O = L-tyrosyl-[protein] + phosphate</text>
        <dbReference type="Rhea" id="RHEA:10684"/>
        <dbReference type="Rhea" id="RHEA-COMP:10136"/>
        <dbReference type="Rhea" id="RHEA-COMP:20101"/>
        <dbReference type="ChEBI" id="CHEBI:15377"/>
        <dbReference type="ChEBI" id="CHEBI:43474"/>
        <dbReference type="ChEBI" id="CHEBI:46858"/>
        <dbReference type="ChEBI" id="CHEBI:61978"/>
        <dbReference type="EC" id="3.1.3.48"/>
    </reaction>
</comment>
<comment type="catalytic activity">
    <reaction evidence="6 10">
        <text>O-phospho-L-seryl-[protein] + H2O = L-seryl-[protein] + phosphate</text>
        <dbReference type="Rhea" id="RHEA:20629"/>
        <dbReference type="Rhea" id="RHEA-COMP:9863"/>
        <dbReference type="Rhea" id="RHEA-COMP:11604"/>
        <dbReference type="ChEBI" id="CHEBI:15377"/>
        <dbReference type="ChEBI" id="CHEBI:29999"/>
        <dbReference type="ChEBI" id="CHEBI:43474"/>
        <dbReference type="ChEBI" id="CHEBI:83421"/>
        <dbReference type="EC" id="3.1.3.16"/>
    </reaction>
</comment>
<comment type="catalytic activity">
    <reaction evidence="6 10">
        <text>O-phospho-L-threonyl-[protein] + H2O = L-threonyl-[protein] + phosphate</text>
        <dbReference type="Rhea" id="RHEA:47004"/>
        <dbReference type="Rhea" id="RHEA-COMP:11060"/>
        <dbReference type="Rhea" id="RHEA-COMP:11605"/>
        <dbReference type="ChEBI" id="CHEBI:15377"/>
        <dbReference type="ChEBI" id="CHEBI:30013"/>
        <dbReference type="ChEBI" id="CHEBI:43474"/>
        <dbReference type="ChEBI" id="CHEBI:61977"/>
        <dbReference type="EC" id="3.1.3.16"/>
    </reaction>
</comment>
<comment type="activity regulation">
    <text evidence="6 10">Activity abolished by tyrosine phosphatase inhibitor sodium vanadate. Activated by rl.</text>
</comment>
<comment type="subunit">
    <text evidence="6">Interacts (via N-terminal region) with phosphorylated rl.</text>
</comment>
<comment type="subcellular location">
    <subcellularLocation>
        <location evidence="6">Cytoplasm</location>
    </subcellularLocation>
</comment>
<comment type="alternative products">
    <event type="alternative splicing"/>
    <isoform>
        <id>Q9VVW5-1</id>
        <name evidence="16">B</name>
        <sequence type="displayed"/>
    </isoform>
    <isoform>
        <id>Q9VVW5-2</id>
        <name evidence="17">A</name>
        <sequence type="described" ref="VSP_041148"/>
    </isoform>
</comment>
<comment type="tissue specificity">
    <text evidence="9">Ubiquitous expression in eye and wing imaginal disks. Enriched in ovary.</text>
</comment>
<comment type="developmental stage">
    <text evidence="6 8 11 12">Low expression in the various developmental stages, although relatively high levels detected in 8 to 12 hour embryos, as well as in pupae and adults, particularly in the head region. Expressed in third-instar eye imaginal disks posterior to the morphogenetic furrow where photoreceptor differentiation occurs. Preferentially detected in wing imaginal disks in two stripes of cells interrupted at the dorsoventral boundary, which correspond to the developing veins L3 and L4. In pupal wings the maximal levels of expression are present in all longitudinal veins, with low levels detected in most intervein cells. Uniformly distributed in the syncytial blastoderm (stage 4). At early stage 5, accumulates at the embryonic poles and is absent from the central region. This pattern evolves very rapidly with the formation of a third central domain of expression from 85% to 40% egg length. In older embryos, the main places where high levels accumulate correspond to the invaginating mesoderm, the tracheal pits at stage 11, the visceral mesoderm at stage 13, the heart, the midline and the apodema. Expression in tracheal branches at later stages.</text>
</comment>
<comment type="disruption phenotype">
    <text evidence="8 9 12">Homozygous embryonic lethal, while hypomorphic alleles (reduction in gene dosage) lead to extra photoreceptor cells in the eye, ectopic veins in wings and severe defects in oogenesis in females. Females with the germ line mutation lay only a small number of eggs. The laid eggs are abnormal, approximately 77% of the laid eggs are shorter and some display severe defects in chorion formation. These embryos could not escape the embryonic stage and progress beyond the two-nuclei stage. Null mutants are viable and fertile exhibiting a mild, but significant increase in wing vein material. They are slightly rough eyed. Null mutation affects the R3 and R4 photoreceptors with a low penetrance resulting in either the loss of one cell of the R3/R4 pair or in the misdifferentiation of these photoreceptors. R3 and R4 are often symmetrically arranged in the eye in opposite to the asymmetrical positions they adopt in wild-type ommatidium. Ommatidia of the null mutants often contain a mystery cell having differentiated as a photoreceptor. Null mutants also exhibit mild delay in tracheal branching. Delay in 12% dorsal branches (DBs) compared with 0.3% in wild-type between metameres 4 to 8 that have reached the dorsal midline at stage 14-15. Null mutants have defects in cell intercalation.</text>
</comment>
<comment type="similarity">
    <text evidence="2">Belongs to the protein-tyrosine phosphatase family. Non-receptor class dual specificity subfamily.</text>
</comment>
<comment type="sequence caution" evidence="15">
    <conflict type="erroneous initiation">
        <sequence resource="EMBL-CDS" id="AAO39540"/>
    </conflict>
    <text>Extended N-terminus.</text>
</comment>